<reference key="1">
    <citation type="journal article" date="2004" name="Nat. Genet.">
        <title>Evidence in the Legionella pneumophila genome for exploitation of host cell functions and high genome plasticity.</title>
        <authorList>
            <person name="Cazalet C."/>
            <person name="Rusniok C."/>
            <person name="Brueggemann H."/>
            <person name="Zidane N."/>
            <person name="Magnier A."/>
            <person name="Ma L."/>
            <person name="Tichit M."/>
            <person name="Jarraud S."/>
            <person name="Bouchier C."/>
            <person name="Vandenesch F."/>
            <person name="Kunst F."/>
            <person name="Etienne J."/>
            <person name="Glaser P."/>
            <person name="Buchrieser C."/>
        </authorList>
    </citation>
    <scope>NUCLEOTIDE SEQUENCE [LARGE SCALE GENOMIC DNA]</scope>
    <source>
        <strain>Paris</strain>
    </source>
</reference>
<name>CYOE_LEGPA</name>
<dbReference type="EC" id="2.5.1.141" evidence="1"/>
<dbReference type="EMBL" id="CR628336">
    <property type="protein sequence ID" value="CAH11627.1"/>
    <property type="molecule type" value="Genomic_DNA"/>
</dbReference>
<dbReference type="RefSeq" id="WP_011213062.1">
    <property type="nucleotide sequence ID" value="NC_006368.1"/>
</dbReference>
<dbReference type="SMR" id="Q5X7X6"/>
<dbReference type="KEGG" id="lpp:lpp0479"/>
<dbReference type="LegioList" id="lpp0479"/>
<dbReference type="HOGENOM" id="CLU_029631_0_2_6"/>
<dbReference type="UniPathway" id="UPA00834">
    <property type="reaction ID" value="UER00712"/>
</dbReference>
<dbReference type="GO" id="GO:0005886">
    <property type="term" value="C:plasma membrane"/>
    <property type="evidence" value="ECO:0007669"/>
    <property type="project" value="UniProtKB-SubCell"/>
</dbReference>
<dbReference type="GO" id="GO:0008495">
    <property type="term" value="F:protoheme IX farnesyltransferase activity"/>
    <property type="evidence" value="ECO:0007669"/>
    <property type="project" value="UniProtKB-UniRule"/>
</dbReference>
<dbReference type="GO" id="GO:0048034">
    <property type="term" value="P:heme O biosynthetic process"/>
    <property type="evidence" value="ECO:0007669"/>
    <property type="project" value="UniProtKB-UniRule"/>
</dbReference>
<dbReference type="CDD" id="cd13957">
    <property type="entry name" value="PT_UbiA_Cox10"/>
    <property type="match status" value="1"/>
</dbReference>
<dbReference type="FunFam" id="1.10.357.140:FF:000001">
    <property type="entry name" value="Protoheme IX farnesyltransferase"/>
    <property type="match status" value="1"/>
</dbReference>
<dbReference type="Gene3D" id="1.10.357.140">
    <property type="entry name" value="UbiA prenyltransferase"/>
    <property type="match status" value="1"/>
</dbReference>
<dbReference type="HAMAP" id="MF_00154">
    <property type="entry name" value="CyoE_CtaB"/>
    <property type="match status" value="1"/>
</dbReference>
<dbReference type="InterPro" id="IPR006369">
    <property type="entry name" value="Protohaem_IX_farnesylTrfase"/>
</dbReference>
<dbReference type="InterPro" id="IPR000537">
    <property type="entry name" value="UbiA_prenyltransferase"/>
</dbReference>
<dbReference type="InterPro" id="IPR030470">
    <property type="entry name" value="UbiA_prenylTrfase_CS"/>
</dbReference>
<dbReference type="InterPro" id="IPR044878">
    <property type="entry name" value="UbiA_sf"/>
</dbReference>
<dbReference type="NCBIfam" id="TIGR01473">
    <property type="entry name" value="cyoE_ctaB"/>
    <property type="match status" value="1"/>
</dbReference>
<dbReference type="NCBIfam" id="NF003349">
    <property type="entry name" value="PRK04375.1-2"/>
    <property type="match status" value="1"/>
</dbReference>
<dbReference type="PANTHER" id="PTHR43448:SF7">
    <property type="entry name" value="4-HYDROXYBENZOATE SOLANESYLTRANSFERASE"/>
    <property type="match status" value="1"/>
</dbReference>
<dbReference type="PANTHER" id="PTHR43448">
    <property type="entry name" value="PROTOHEME IX FARNESYLTRANSFERASE, MITOCHONDRIAL"/>
    <property type="match status" value="1"/>
</dbReference>
<dbReference type="Pfam" id="PF01040">
    <property type="entry name" value="UbiA"/>
    <property type="match status" value="1"/>
</dbReference>
<dbReference type="PROSITE" id="PS00943">
    <property type="entry name" value="UBIA"/>
    <property type="match status" value="1"/>
</dbReference>
<feature type="chain" id="PRO_0000326907" description="Protoheme IX farnesyltransferase">
    <location>
        <begin position="1"/>
        <end position="294"/>
    </location>
</feature>
<feature type="transmembrane region" description="Helical" evidence="1">
    <location>
        <begin position="24"/>
        <end position="44"/>
    </location>
</feature>
<feature type="transmembrane region" description="Helical" evidence="1">
    <location>
        <begin position="48"/>
        <end position="68"/>
    </location>
</feature>
<feature type="transmembrane region" description="Helical" evidence="1">
    <location>
        <begin position="96"/>
        <end position="116"/>
    </location>
</feature>
<feature type="transmembrane region" description="Helical" evidence="1">
    <location>
        <begin position="118"/>
        <end position="138"/>
    </location>
</feature>
<feature type="transmembrane region" description="Helical" evidence="1">
    <location>
        <begin position="146"/>
        <end position="166"/>
    </location>
</feature>
<feature type="transmembrane region" description="Helical" evidence="1">
    <location>
        <begin position="172"/>
        <end position="192"/>
    </location>
</feature>
<feature type="transmembrane region" description="Helical" evidence="1">
    <location>
        <begin position="224"/>
        <end position="244"/>
    </location>
</feature>
<feature type="transmembrane region" description="Helical" evidence="1">
    <location>
        <begin position="245"/>
        <end position="265"/>
    </location>
</feature>
<feature type="transmembrane region" description="Helical" evidence="1">
    <location>
        <begin position="268"/>
        <end position="288"/>
    </location>
</feature>
<gene>
    <name evidence="1" type="primary">cyoE</name>
    <name type="ordered locus">lpp0479</name>
</gene>
<proteinExistence type="inferred from homology"/>
<comment type="function">
    <text evidence="1">Converts heme B (protoheme IX) to heme O by substitution of the vinyl group on carbon 2 of heme B porphyrin ring with a hydroxyethyl farnesyl side group.</text>
</comment>
<comment type="catalytic activity">
    <reaction evidence="1">
        <text>heme b + (2E,6E)-farnesyl diphosphate + H2O = Fe(II)-heme o + diphosphate</text>
        <dbReference type="Rhea" id="RHEA:28070"/>
        <dbReference type="ChEBI" id="CHEBI:15377"/>
        <dbReference type="ChEBI" id="CHEBI:33019"/>
        <dbReference type="ChEBI" id="CHEBI:60344"/>
        <dbReference type="ChEBI" id="CHEBI:60530"/>
        <dbReference type="ChEBI" id="CHEBI:175763"/>
        <dbReference type="EC" id="2.5.1.141"/>
    </reaction>
</comment>
<comment type="pathway">
    <text evidence="1">Porphyrin-containing compound metabolism; heme O biosynthesis; heme O from protoheme: step 1/1.</text>
</comment>
<comment type="subcellular location">
    <subcellularLocation>
        <location evidence="1">Cell inner membrane</location>
        <topology evidence="1">Multi-pass membrane protein</topology>
    </subcellularLocation>
</comment>
<comment type="miscellaneous">
    <text evidence="1">Carbon 2 of the heme B porphyrin ring is defined according to the Fischer nomenclature.</text>
</comment>
<comment type="similarity">
    <text evidence="1">Belongs to the UbiA prenyltransferase family. Protoheme IX farnesyltransferase subfamily.</text>
</comment>
<sequence length="294" mass="33000">MRTEYAARLPVDWRDYVELCKPRVVLLMLLTVIVGMYLAAPGWVSLRLIAFTLLGIGLCAGSAAAINHLVDRHIDSIMARTKKRPVAYGRVSVKQALWFAVIIGLMGLSLLILFVNQLTALLTFVTLIGYAGVYTGYLKRATSQNIVIGGLAGAAPPLLGWTAVTGQLDPQALLLVLIIFTWTPPHFWALAIYRYKEYQDAEIPMLPVTHGIQFTKLNIYLYTVLLLVVSLLPFVVSMSGWIYLLGALVLGIRFLVWAHKLYFTDKPVVAMQTFRFSILYLMLLFVFLLVDHYF</sequence>
<accession>Q5X7X6</accession>
<organism>
    <name type="scientific">Legionella pneumophila (strain Paris)</name>
    <dbReference type="NCBI Taxonomy" id="297246"/>
    <lineage>
        <taxon>Bacteria</taxon>
        <taxon>Pseudomonadati</taxon>
        <taxon>Pseudomonadota</taxon>
        <taxon>Gammaproteobacteria</taxon>
        <taxon>Legionellales</taxon>
        <taxon>Legionellaceae</taxon>
        <taxon>Legionella</taxon>
    </lineage>
</organism>
<protein>
    <recommendedName>
        <fullName evidence="1">Protoheme IX farnesyltransferase</fullName>
        <ecNumber evidence="1">2.5.1.141</ecNumber>
    </recommendedName>
    <alternativeName>
        <fullName evidence="1">Heme B farnesyltransferase</fullName>
    </alternativeName>
    <alternativeName>
        <fullName evidence="1">Heme O synthase</fullName>
    </alternativeName>
</protein>
<evidence type="ECO:0000255" key="1">
    <source>
        <dbReference type="HAMAP-Rule" id="MF_00154"/>
    </source>
</evidence>
<keyword id="KW-0997">Cell inner membrane</keyword>
<keyword id="KW-1003">Cell membrane</keyword>
<keyword id="KW-0350">Heme biosynthesis</keyword>
<keyword id="KW-0472">Membrane</keyword>
<keyword id="KW-0808">Transferase</keyword>
<keyword id="KW-0812">Transmembrane</keyword>
<keyword id="KW-1133">Transmembrane helix</keyword>